<sequence>MRQTKTGILLANLGTPDAPTPEAVKRYLKQFLSDRRVVDTSRLLWWPLLRGVILPLRSPRVAKLYASVWMEGGSPLMVYSRQQQQALAQRLPEMPVALGMSYGSPSLESAVDELLAEHVDHIVVLPLYPQFSCSTVGAVWDELARILARKRSIPGISFIRDYADNHDYINALANSVRASFAKHGEPDLLLLSYHGIPQRYADEGDDYPQRCRTTTRELASALGMAPEKVMMTFQSRFGREPWLMPYTDETLKMLGEKGVGHIQVMCPGFAADCLETLEEIAEQNREVFLGAGGKKYEYIPALNATPEHIEMMANLVAAYR</sequence>
<proteinExistence type="inferred from homology"/>
<protein>
    <recommendedName>
        <fullName evidence="1">Ferrochelatase</fullName>
        <ecNumber evidence="1">4.98.1.1</ecNumber>
    </recommendedName>
    <alternativeName>
        <fullName evidence="1">Heme synthase</fullName>
    </alternativeName>
    <alternativeName>
        <fullName evidence="1">Protoheme ferro-lyase</fullName>
    </alternativeName>
</protein>
<name>HEMH_ECODH</name>
<gene>
    <name evidence="1" type="primary">hemH</name>
    <name type="ordered locus">ECDH10B_0431</name>
</gene>
<accession>B1XFR2</accession>
<dbReference type="EC" id="4.98.1.1" evidence="1"/>
<dbReference type="EMBL" id="CP000948">
    <property type="protein sequence ID" value="ACB01602.1"/>
    <property type="molecule type" value="Genomic_DNA"/>
</dbReference>
<dbReference type="RefSeq" id="WP_001250103.1">
    <property type="nucleotide sequence ID" value="NC_010473.1"/>
</dbReference>
<dbReference type="SMR" id="B1XFR2"/>
<dbReference type="KEGG" id="ecd:ECDH10B_0431"/>
<dbReference type="HOGENOM" id="CLU_018884_0_0_6"/>
<dbReference type="UniPathway" id="UPA00252">
    <property type="reaction ID" value="UER00325"/>
</dbReference>
<dbReference type="GO" id="GO:0005737">
    <property type="term" value="C:cytoplasm"/>
    <property type="evidence" value="ECO:0007669"/>
    <property type="project" value="UniProtKB-SubCell"/>
</dbReference>
<dbReference type="GO" id="GO:0004325">
    <property type="term" value="F:ferrochelatase activity"/>
    <property type="evidence" value="ECO:0007669"/>
    <property type="project" value="UniProtKB-UniRule"/>
</dbReference>
<dbReference type="GO" id="GO:0046872">
    <property type="term" value="F:metal ion binding"/>
    <property type="evidence" value="ECO:0007669"/>
    <property type="project" value="UniProtKB-KW"/>
</dbReference>
<dbReference type="GO" id="GO:0006783">
    <property type="term" value="P:heme biosynthetic process"/>
    <property type="evidence" value="ECO:0007669"/>
    <property type="project" value="UniProtKB-UniRule"/>
</dbReference>
<dbReference type="CDD" id="cd00419">
    <property type="entry name" value="Ferrochelatase_C"/>
    <property type="match status" value="1"/>
</dbReference>
<dbReference type="CDD" id="cd03411">
    <property type="entry name" value="Ferrochelatase_N"/>
    <property type="match status" value="1"/>
</dbReference>
<dbReference type="FunFam" id="3.40.50.1400:FF:000004">
    <property type="entry name" value="Ferrochelatase"/>
    <property type="match status" value="1"/>
</dbReference>
<dbReference type="Gene3D" id="3.40.50.1400">
    <property type="match status" value="2"/>
</dbReference>
<dbReference type="HAMAP" id="MF_00323">
    <property type="entry name" value="Ferrochelatase"/>
    <property type="match status" value="1"/>
</dbReference>
<dbReference type="InterPro" id="IPR001015">
    <property type="entry name" value="Ferrochelatase"/>
</dbReference>
<dbReference type="InterPro" id="IPR019772">
    <property type="entry name" value="Ferrochelatase_AS"/>
</dbReference>
<dbReference type="InterPro" id="IPR033644">
    <property type="entry name" value="Ferrochelatase_C"/>
</dbReference>
<dbReference type="InterPro" id="IPR033659">
    <property type="entry name" value="Ferrochelatase_N"/>
</dbReference>
<dbReference type="NCBIfam" id="TIGR00109">
    <property type="entry name" value="hemH"/>
    <property type="match status" value="1"/>
</dbReference>
<dbReference type="PANTHER" id="PTHR11108">
    <property type="entry name" value="FERROCHELATASE"/>
    <property type="match status" value="1"/>
</dbReference>
<dbReference type="PANTHER" id="PTHR11108:SF1">
    <property type="entry name" value="FERROCHELATASE, MITOCHONDRIAL"/>
    <property type="match status" value="1"/>
</dbReference>
<dbReference type="Pfam" id="PF00762">
    <property type="entry name" value="Ferrochelatase"/>
    <property type="match status" value="1"/>
</dbReference>
<dbReference type="SUPFAM" id="SSF53800">
    <property type="entry name" value="Chelatase"/>
    <property type="match status" value="1"/>
</dbReference>
<dbReference type="PROSITE" id="PS00534">
    <property type="entry name" value="FERROCHELATASE"/>
    <property type="match status" value="1"/>
</dbReference>
<feature type="chain" id="PRO_1000116043" description="Ferrochelatase">
    <location>
        <begin position="1"/>
        <end position="320"/>
    </location>
</feature>
<feature type="binding site" evidence="1">
    <location>
        <position position="194"/>
    </location>
    <ligand>
        <name>Fe cation</name>
        <dbReference type="ChEBI" id="CHEBI:24875"/>
    </ligand>
</feature>
<feature type="binding site" evidence="1">
    <location>
        <position position="275"/>
    </location>
    <ligand>
        <name>Fe cation</name>
        <dbReference type="ChEBI" id="CHEBI:24875"/>
    </ligand>
</feature>
<organism>
    <name type="scientific">Escherichia coli (strain K12 / DH10B)</name>
    <dbReference type="NCBI Taxonomy" id="316385"/>
    <lineage>
        <taxon>Bacteria</taxon>
        <taxon>Pseudomonadati</taxon>
        <taxon>Pseudomonadota</taxon>
        <taxon>Gammaproteobacteria</taxon>
        <taxon>Enterobacterales</taxon>
        <taxon>Enterobacteriaceae</taxon>
        <taxon>Escherichia</taxon>
    </lineage>
</organism>
<comment type="function">
    <text evidence="1">Catalyzes the ferrous insertion into protoporphyrin IX.</text>
</comment>
<comment type="catalytic activity">
    <reaction evidence="1">
        <text>heme b + 2 H(+) = protoporphyrin IX + Fe(2+)</text>
        <dbReference type="Rhea" id="RHEA:22584"/>
        <dbReference type="ChEBI" id="CHEBI:15378"/>
        <dbReference type="ChEBI" id="CHEBI:29033"/>
        <dbReference type="ChEBI" id="CHEBI:57306"/>
        <dbReference type="ChEBI" id="CHEBI:60344"/>
        <dbReference type="EC" id="4.98.1.1"/>
    </reaction>
</comment>
<comment type="pathway">
    <text evidence="1">Porphyrin-containing compound metabolism; protoheme biosynthesis; protoheme from protoporphyrin-IX: step 1/1.</text>
</comment>
<comment type="subunit">
    <text evidence="1">Monomer.</text>
</comment>
<comment type="subcellular location">
    <subcellularLocation>
        <location evidence="1">Cytoplasm</location>
    </subcellularLocation>
</comment>
<comment type="similarity">
    <text evidence="1">Belongs to the ferrochelatase family.</text>
</comment>
<evidence type="ECO:0000255" key="1">
    <source>
        <dbReference type="HAMAP-Rule" id="MF_00323"/>
    </source>
</evidence>
<reference key="1">
    <citation type="journal article" date="2008" name="J. Bacteriol.">
        <title>The complete genome sequence of Escherichia coli DH10B: insights into the biology of a laboratory workhorse.</title>
        <authorList>
            <person name="Durfee T."/>
            <person name="Nelson R."/>
            <person name="Baldwin S."/>
            <person name="Plunkett G. III"/>
            <person name="Burland V."/>
            <person name="Mau B."/>
            <person name="Petrosino J.F."/>
            <person name="Qin X."/>
            <person name="Muzny D.M."/>
            <person name="Ayele M."/>
            <person name="Gibbs R.A."/>
            <person name="Csorgo B."/>
            <person name="Posfai G."/>
            <person name="Weinstock G.M."/>
            <person name="Blattner F.R."/>
        </authorList>
    </citation>
    <scope>NUCLEOTIDE SEQUENCE [LARGE SCALE GENOMIC DNA]</scope>
    <source>
        <strain>K12 / DH10B</strain>
    </source>
</reference>
<keyword id="KW-0963">Cytoplasm</keyword>
<keyword id="KW-0350">Heme biosynthesis</keyword>
<keyword id="KW-0408">Iron</keyword>
<keyword id="KW-0456">Lyase</keyword>
<keyword id="KW-0479">Metal-binding</keyword>
<keyword id="KW-0627">Porphyrin biosynthesis</keyword>